<keyword id="KW-0010">Activator</keyword>
<keyword id="KW-0067">ATP-binding</keyword>
<keyword id="KW-0227">DNA damage</keyword>
<keyword id="KW-0234">DNA repair</keyword>
<keyword id="KW-0238">DNA-binding</keyword>
<keyword id="KW-0378">Hydrolase</keyword>
<keyword id="KW-0547">Nucleotide-binding</keyword>
<keyword id="KW-0539">Nucleus</keyword>
<keyword id="KW-1185">Reference proteome</keyword>
<keyword id="KW-0804">Transcription</keyword>
<keyword id="KW-0805">Transcription regulation</keyword>
<accession>A5E0W5</accession>
<sequence>MNILSMLSNDSAVQLQLQLQLQLQLQLNLQSAPSKASPPTLLPKQTTATTTNATGNTKTVARYSAGDINILNDENSHGVDESIDEPVTNGQATNKESVKQEPTQPTNNTETEKKPLTLSIQNGADKKSLPPQSQPPRINPLVADVTLSTSKFKNVLAHIQHDQLEIDLDYKFKFESNVSLIDQLDKNQRLSQDLRILKFDEVKSNNYLISTHQFTTNYIDRVVAEDISSRNNKISDTNKNKEIIHIDHSKPLHHNSTRGKEYKWGSTREIHKVESKPKRKRNTENSETNNSRSTVSSKASTPSKSLAFGSTHHVPIRPKGSKGTNLSSSSGPITDITNDSNNVRRSSRPKSKRKAYEDGEGEDNGNNIDSNSTDNNNRNKTQEGGRGPKRIRIKLKVKPEGENEGEEKDEGKGKGRGKGKGKGKGKGKEKDGDKEEEDENNANGENGKSKGSVSSSTTTTTTAAAAAAGGGGSTGSALGTTTSNSSTSKEQKAFMRQYDNTYVAIWKDMSRKDGPKVSRLMQQSTQAKLINLKKTCILAAREAKRWQVKNTKNQKDLSTKARRAMREMFNFWKRNERIERELKKKHEKELVEKAKREEEERESKRQSRKLNFLITQTELYSHFIGKKIKTDEIEGTDADPRIKAQEKAHLDKYAGVDAANNDILAIDFDNDDEDALHRAAAQNAQNALANAQNQAKQFDDTEPFKNPDTNGEEMNFQNPTLLGDLSIEQPKMLKCTLKEYQIKGLNWLANLYEQGINGILADEMGLGKTVQSISVLSYLAETHNIWGPFLVVTPASTLHNWQQEISKFVPNFKVLPYWGHAKDRKVLRKFWDRKSLRYDKDAPFHVLVTSYQLIVSDIAYFQKMKWQYMILDEAQAIKSSQSSRWKSLLSLSCRNRLLLTGTPIQNSMQELWALLHFIMPTLFDSHDEFSDWFSKDIESHAQSNTGLDEQQLRRLHMILKPFMLRRIKKNVQSELGDKVEIDLFCDLTNRQKKYYQSLRSQISIMDLIDATTTNSSSNNSSLDDSSTTSLVNLVMQFRKVCNHPDLFERADVRSPMALVKFAETGSFLREGNDLDVSYASENLINYNLPRLIYDDLISANENKNDFGSVYAKFSVYDPENLRDLGWISSAGTSPNEIQQLGKMNVLERAIKLQRYTTGSPLDRINYLYEGDYSSPNSKLLINPQNQHMISQQQIENSSVLLDLCNISQKVYEEMYLNTQDPAFTPLASAPPITIVCSSNNFQNKLQNELFNPTIRSALAPMSLNKELEFMNNNTPLELYPPSNMLPSSLSKVNDYSNIRMPSMDRFITESGKLAKLDELLVKLKQEDHRVLIYFQMTKMMDLMEEYLTFKQHKYIRLDGSSKLDDRRDLVHDWQTKPEIFVFLLSTRAGGLGINLTAADTVVFYDSDWNPTIDSQAMDRAHRLGQTRQVTVYRLLTRNTIEERMRDRAKQKEQVQQVVMEGKATTIMSKKEDAASKKKDVAFLLLGGSGDGDGDGTGVNSGVDTSNDVSKSTTPKPEVGKKKNNGNKKNVFGNGKKRVREEDGEEEDALNSKRLQELYHEGEGEFSGTVTPAPGV</sequence>
<protein>
    <recommendedName>
        <fullName evidence="1">Chromatin-remodeling ATPase INO80</fullName>
        <ecNumber evidence="1">3.6.4.-</ecNumber>
    </recommendedName>
</protein>
<feature type="chain" id="PRO_0000350959" description="Chromatin-remodeling ATPase INO80">
    <location>
        <begin position="1"/>
        <end position="1575"/>
    </location>
</feature>
<feature type="domain" description="DBINO" evidence="5">
    <location>
        <begin position="505"/>
        <end position="630"/>
    </location>
</feature>
<feature type="domain" description="Helicase ATP-binding" evidence="3">
    <location>
        <begin position="749"/>
        <end position="921"/>
    </location>
</feature>
<feature type="domain" description="Helicase C-terminal" evidence="4">
    <location>
        <begin position="1315"/>
        <end position="1470"/>
    </location>
</feature>
<feature type="region of interest" description="Disordered" evidence="6">
    <location>
        <begin position="33"/>
        <end position="57"/>
    </location>
</feature>
<feature type="region of interest" description="Disordered" evidence="6">
    <location>
        <begin position="71"/>
        <end position="116"/>
    </location>
</feature>
<feature type="region of interest" description="Disordered" evidence="6">
    <location>
        <begin position="239"/>
        <end position="490"/>
    </location>
</feature>
<feature type="region of interest" description="Disordered" evidence="6">
    <location>
        <begin position="690"/>
        <end position="718"/>
    </location>
</feature>
<feature type="region of interest" description="Disordered" evidence="6">
    <location>
        <begin position="1488"/>
        <end position="1549"/>
    </location>
</feature>
<feature type="short sequence motif" description="DEAQ box">
    <location>
        <begin position="872"/>
        <end position="875"/>
    </location>
</feature>
<feature type="compositionally biased region" description="Low complexity" evidence="6">
    <location>
        <begin position="42"/>
        <end position="57"/>
    </location>
</feature>
<feature type="compositionally biased region" description="Low complexity" evidence="6">
    <location>
        <begin position="100"/>
        <end position="109"/>
    </location>
</feature>
<feature type="compositionally biased region" description="Basic and acidic residues" evidence="6">
    <location>
        <begin position="239"/>
        <end position="250"/>
    </location>
</feature>
<feature type="compositionally biased region" description="Basic and acidic residues" evidence="6">
    <location>
        <begin position="258"/>
        <end position="276"/>
    </location>
</feature>
<feature type="compositionally biased region" description="Low complexity" evidence="6">
    <location>
        <begin position="285"/>
        <end position="297"/>
    </location>
</feature>
<feature type="compositionally biased region" description="Polar residues" evidence="6">
    <location>
        <begin position="322"/>
        <end position="343"/>
    </location>
</feature>
<feature type="compositionally biased region" description="Low complexity" evidence="6">
    <location>
        <begin position="364"/>
        <end position="379"/>
    </location>
</feature>
<feature type="compositionally biased region" description="Basic residues" evidence="6">
    <location>
        <begin position="387"/>
        <end position="396"/>
    </location>
</feature>
<feature type="compositionally biased region" description="Basic residues" evidence="6">
    <location>
        <begin position="414"/>
        <end position="425"/>
    </location>
</feature>
<feature type="compositionally biased region" description="Low complexity" evidence="6">
    <location>
        <begin position="441"/>
        <end position="467"/>
    </location>
</feature>
<feature type="compositionally biased region" description="Low complexity" evidence="6">
    <location>
        <begin position="475"/>
        <end position="488"/>
    </location>
</feature>
<feature type="compositionally biased region" description="Gly residues" evidence="6">
    <location>
        <begin position="1488"/>
        <end position="1498"/>
    </location>
</feature>
<feature type="compositionally biased region" description="Polar residues" evidence="6">
    <location>
        <begin position="1505"/>
        <end position="1514"/>
    </location>
</feature>
<feature type="binding site" evidence="3">
    <location>
        <begin position="762"/>
        <end position="769"/>
    </location>
    <ligand>
        <name>ATP</name>
        <dbReference type="ChEBI" id="CHEBI:30616"/>
    </ligand>
</feature>
<evidence type="ECO:0000250" key="1">
    <source>
        <dbReference type="UniProtKB" id="P53115"/>
    </source>
</evidence>
<evidence type="ECO:0000250" key="2">
    <source>
        <dbReference type="UniProtKB" id="Q9ULG1"/>
    </source>
</evidence>
<evidence type="ECO:0000255" key="3">
    <source>
        <dbReference type="PROSITE-ProRule" id="PRU00541"/>
    </source>
</evidence>
<evidence type="ECO:0000255" key="4">
    <source>
        <dbReference type="PROSITE-ProRule" id="PRU00542"/>
    </source>
</evidence>
<evidence type="ECO:0000255" key="5">
    <source>
        <dbReference type="PROSITE-ProRule" id="PRU00746"/>
    </source>
</evidence>
<evidence type="ECO:0000256" key="6">
    <source>
        <dbReference type="SAM" id="MobiDB-lite"/>
    </source>
</evidence>
<evidence type="ECO:0000305" key="7"/>
<gene>
    <name type="primary">INO80</name>
    <name type="ORF">LELG_03252</name>
</gene>
<name>INO80_LODEL</name>
<organism>
    <name type="scientific">Lodderomyces elongisporus (strain ATCC 11503 / CBS 2605 / JCM 1781 / NBRC 1676 / NRRL YB-4239)</name>
    <name type="common">Yeast</name>
    <name type="synonym">Saccharomyces elongisporus</name>
    <dbReference type="NCBI Taxonomy" id="379508"/>
    <lineage>
        <taxon>Eukaryota</taxon>
        <taxon>Fungi</taxon>
        <taxon>Dikarya</taxon>
        <taxon>Ascomycota</taxon>
        <taxon>Saccharomycotina</taxon>
        <taxon>Pichiomycetes</taxon>
        <taxon>Debaryomycetaceae</taxon>
        <taxon>Candida/Lodderomyces clade</taxon>
        <taxon>Lodderomyces</taxon>
    </lineage>
</organism>
<proteinExistence type="inferred from homology"/>
<reference key="1">
    <citation type="journal article" date="2009" name="Nature">
        <title>Evolution of pathogenicity and sexual reproduction in eight Candida genomes.</title>
        <authorList>
            <person name="Butler G."/>
            <person name="Rasmussen M.D."/>
            <person name="Lin M.F."/>
            <person name="Santos M.A.S."/>
            <person name="Sakthikumar S."/>
            <person name="Munro C.A."/>
            <person name="Rheinbay E."/>
            <person name="Grabherr M."/>
            <person name="Forche A."/>
            <person name="Reedy J.L."/>
            <person name="Agrafioti I."/>
            <person name="Arnaud M.B."/>
            <person name="Bates S."/>
            <person name="Brown A.J.P."/>
            <person name="Brunke S."/>
            <person name="Costanzo M.C."/>
            <person name="Fitzpatrick D.A."/>
            <person name="de Groot P.W.J."/>
            <person name="Harris D."/>
            <person name="Hoyer L.L."/>
            <person name="Hube B."/>
            <person name="Klis F.M."/>
            <person name="Kodira C."/>
            <person name="Lennard N."/>
            <person name="Logue M.E."/>
            <person name="Martin R."/>
            <person name="Neiman A.M."/>
            <person name="Nikolaou E."/>
            <person name="Quail M.A."/>
            <person name="Quinn J."/>
            <person name="Santos M.C."/>
            <person name="Schmitzberger F.F."/>
            <person name="Sherlock G."/>
            <person name="Shah P."/>
            <person name="Silverstein K.A.T."/>
            <person name="Skrzypek M.S."/>
            <person name="Soll D."/>
            <person name="Staggs R."/>
            <person name="Stansfield I."/>
            <person name="Stumpf M.P.H."/>
            <person name="Sudbery P.E."/>
            <person name="Srikantha T."/>
            <person name="Zeng Q."/>
            <person name="Berman J."/>
            <person name="Berriman M."/>
            <person name="Heitman J."/>
            <person name="Gow N.A.R."/>
            <person name="Lorenz M.C."/>
            <person name="Birren B.W."/>
            <person name="Kellis M."/>
            <person name="Cuomo C.A."/>
        </authorList>
    </citation>
    <scope>NUCLEOTIDE SEQUENCE [LARGE SCALE GENOMIC DNA]</scope>
    <source>
        <strain>ATCC 11503 / BCRC 21390 / CBS 2605 / JCM 1781 / NBRC 1676 / NRRL YB-4239</strain>
    </source>
</reference>
<dbReference type="EC" id="3.6.4.-" evidence="1"/>
<dbReference type="EMBL" id="CH981527">
    <property type="protein sequence ID" value="EDK45073.1"/>
    <property type="molecule type" value="Genomic_DNA"/>
</dbReference>
<dbReference type="RefSeq" id="XP_001525324.1">
    <property type="nucleotide sequence ID" value="XM_001525274.1"/>
</dbReference>
<dbReference type="SMR" id="A5E0W5"/>
<dbReference type="FunCoup" id="A5E0W5">
    <property type="interactions" value="1076"/>
</dbReference>
<dbReference type="STRING" id="379508.A5E0W5"/>
<dbReference type="GeneID" id="5232539"/>
<dbReference type="KEGG" id="lel:PVL30_002748"/>
<dbReference type="VEuPathDB" id="FungiDB:LELG_03252"/>
<dbReference type="eggNOG" id="KOG0388">
    <property type="taxonomic scope" value="Eukaryota"/>
</dbReference>
<dbReference type="HOGENOM" id="CLU_000315_20_1_1"/>
<dbReference type="InParanoid" id="A5E0W5"/>
<dbReference type="OMA" id="GNHTPLM"/>
<dbReference type="OrthoDB" id="372624at2759"/>
<dbReference type="Proteomes" id="UP000001996">
    <property type="component" value="Unassembled WGS sequence"/>
</dbReference>
<dbReference type="GO" id="GO:0000775">
    <property type="term" value="C:chromosome, centromeric region"/>
    <property type="evidence" value="ECO:0007669"/>
    <property type="project" value="EnsemblFungi"/>
</dbReference>
<dbReference type="GO" id="GO:0000781">
    <property type="term" value="C:chromosome, telomeric region"/>
    <property type="evidence" value="ECO:0007669"/>
    <property type="project" value="GOC"/>
</dbReference>
<dbReference type="GO" id="GO:0031011">
    <property type="term" value="C:Ino80 complex"/>
    <property type="evidence" value="ECO:0007669"/>
    <property type="project" value="EnsemblFungi"/>
</dbReference>
<dbReference type="GO" id="GO:0005524">
    <property type="term" value="F:ATP binding"/>
    <property type="evidence" value="ECO:0007669"/>
    <property type="project" value="UniProtKB-KW"/>
</dbReference>
<dbReference type="GO" id="GO:0016887">
    <property type="term" value="F:ATP hydrolysis activity"/>
    <property type="evidence" value="ECO:0007669"/>
    <property type="project" value="EnsemblFungi"/>
</dbReference>
<dbReference type="GO" id="GO:0140658">
    <property type="term" value="F:ATP-dependent chromatin remodeler activity"/>
    <property type="evidence" value="ECO:0007669"/>
    <property type="project" value="InterPro"/>
</dbReference>
<dbReference type="GO" id="GO:0003677">
    <property type="term" value="F:DNA binding"/>
    <property type="evidence" value="ECO:0007669"/>
    <property type="project" value="UniProtKB-KW"/>
</dbReference>
<dbReference type="GO" id="GO:0042393">
    <property type="term" value="F:histone binding"/>
    <property type="evidence" value="ECO:0007669"/>
    <property type="project" value="TreeGrafter"/>
</dbReference>
<dbReference type="GO" id="GO:0034080">
    <property type="term" value="P:CENP-A containing chromatin assembly"/>
    <property type="evidence" value="ECO:0007669"/>
    <property type="project" value="EnsemblFungi"/>
</dbReference>
<dbReference type="GO" id="GO:0006281">
    <property type="term" value="P:DNA repair"/>
    <property type="evidence" value="ECO:0007669"/>
    <property type="project" value="UniProtKB-KW"/>
</dbReference>
<dbReference type="GO" id="GO:0045944">
    <property type="term" value="P:positive regulation of transcription by RNA polymerase II"/>
    <property type="evidence" value="ECO:0007669"/>
    <property type="project" value="EnsemblFungi"/>
</dbReference>
<dbReference type="GO" id="GO:0032006">
    <property type="term" value="P:regulation of TOR signaling"/>
    <property type="evidence" value="ECO:0007669"/>
    <property type="project" value="EnsemblFungi"/>
</dbReference>
<dbReference type="GO" id="GO:0031509">
    <property type="term" value="P:subtelomeric heterochromatin formation"/>
    <property type="evidence" value="ECO:0007669"/>
    <property type="project" value="EnsemblFungi"/>
</dbReference>
<dbReference type="GO" id="GO:0000722">
    <property type="term" value="P:telomere maintenance via recombination"/>
    <property type="evidence" value="ECO:0007669"/>
    <property type="project" value="EnsemblFungi"/>
</dbReference>
<dbReference type="GO" id="GO:0006366">
    <property type="term" value="P:transcription by RNA polymerase II"/>
    <property type="evidence" value="ECO:0007669"/>
    <property type="project" value="EnsemblFungi"/>
</dbReference>
<dbReference type="CDD" id="cd18002">
    <property type="entry name" value="DEXQc_INO80"/>
    <property type="match status" value="1"/>
</dbReference>
<dbReference type="CDD" id="cd18793">
    <property type="entry name" value="SF2_C_SNF"/>
    <property type="match status" value="1"/>
</dbReference>
<dbReference type="FunFam" id="3.40.50.10810:FF:000022">
    <property type="entry name" value="Blast:Putative DNA helicase Ino80"/>
    <property type="match status" value="1"/>
</dbReference>
<dbReference type="FunFam" id="3.40.50.300:FF:001269">
    <property type="entry name" value="SNF2 family helicase/ATPase"/>
    <property type="match status" value="1"/>
</dbReference>
<dbReference type="Gene3D" id="3.40.50.300">
    <property type="entry name" value="P-loop containing nucleotide triphosphate hydrolases"/>
    <property type="match status" value="2"/>
</dbReference>
<dbReference type="Gene3D" id="3.40.50.10810">
    <property type="entry name" value="Tandem AAA-ATPase domain"/>
    <property type="match status" value="1"/>
</dbReference>
<dbReference type="InterPro" id="IPR020838">
    <property type="entry name" value="DBINO"/>
</dbReference>
<dbReference type="InterPro" id="IPR031047">
    <property type="entry name" value="DEXQc_INO80"/>
</dbReference>
<dbReference type="InterPro" id="IPR014001">
    <property type="entry name" value="Helicase_ATP-bd"/>
</dbReference>
<dbReference type="InterPro" id="IPR001650">
    <property type="entry name" value="Helicase_C-like"/>
</dbReference>
<dbReference type="InterPro" id="IPR050520">
    <property type="entry name" value="INO80/SWR1_helicase"/>
</dbReference>
<dbReference type="InterPro" id="IPR027417">
    <property type="entry name" value="P-loop_NTPase"/>
</dbReference>
<dbReference type="InterPro" id="IPR038718">
    <property type="entry name" value="SNF2-like_sf"/>
</dbReference>
<dbReference type="InterPro" id="IPR049730">
    <property type="entry name" value="SNF2/RAD54-like_C"/>
</dbReference>
<dbReference type="InterPro" id="IPR000330">
    <property type="entry name" value="SNF2_N"/>
</dbReference>
<dbReference type="PANTHER" id="PTHR45685:SF2">
    <property type="entry name" value="CHROMATIN-REMODELING ATPASE INO80"/>
    <property type="match status" value="1"/>
</dbReference>
<dbReference type="PANTHER" id="PTHR45685">
    <property type="entry name" value="HELICASE SRCAP-RELATED"/>
    <property type="match status" value="1"/>
</dbReference>
<dbReference type="Pfam" id="PF13892">
    <property type="entry name" value="DBINO"/>
    <property type="match status" value="1"/>
</dbReference>
<dbReference type="Pfam" id="PF00271">
    <property type="entry name" value="Helicase_C"/>
    <property type="match status" value="1"/>
</dbReference>
<dbReference type="Pfam" id="PF00176">
    <property type="entry name" value="SNF2-rel_dom"/>
    <property type="match status" value="1"/>
</dbReference>
<dbReference type="SMART" id="SM00487">
    <property type="entry name" value="DEXDc"/>
    <property type="match status" value="1"/>
</dbReference>
<dbReference type="SMART" id="SM00490">
    <property type="entry name" value="HELICc"/>
    <property type="match status" value="1"/>
</dbReference>
<dbReference type="SUPFAM" id="SSF52540">
    <property type="entry name" value="P-loop containing nucleoside triphosphate hydrolases"/>
    <property type="match status" value="2"/>
</dbReference>
<dbReference type="PROSITE" id="PS51413">
    <property type="entry name" value="DBINO"/>
    <property type="match status" value="1"/>
</dbReference>
<dbReference type="PROSITE" id="PS51192">
    <property type="entry name" value="HELICASE_ATP_BIND_1"/>
    <property type="match status" value="1"/>
</dbReference>
<dbReference type="PROSITE" id="PS51194">
    <property type="entry name" value="HELICASE_CTER"/>
    <property type="match status" value="1"/>
</dbReference>
<comment type="function">
    <text evidence="5">ATPase component of the INO80 complex which remodels chromatin by shifting nucleosomes and is involved in DNA repair.</text>
</comment>
<comment type="catalytic activity">
    <reaction evidence="1">
        <text>ATP + H2O = ADP + phosphate + H(+)</text>
        <dbReference type="Rhea" id="RHEA:13065"/>
        <dbReference type="ChEBI" id="CHEBI:15377"/>
        <dbReference type="ChEBI" id="CHEBI:15378"/>
        <dbReference type="ChEBI" id="CHEBI:30616"/>
        <dbReference type="ChEBI" id="CHEBI:43474"/>
        <dbReference type="ChEBI" id="CHEBI:456216"/>
    </reaction>
</comment>
<comment type="subunit">
    <text evidence="5">Component of the INO80 chromatin-remodeling complex.</text>
</comment>
<comment type="subcellular location">
    <subcellularLocation>
        <location evidence="5">Nucleus</location>
    </subcellularLocation>
</comment>
<comment type="domain">
    <text evidence="2">The DBINO region is involved in binding to DNA.</text>
</comment>
<comment type="similarity">
    <text evidence="7">Belongs to the SNF2/RAD54 helicase family.</text>
</comment>